<name>RIMO_ZYMMO</name>
<evidence type="ECO:0000255" key="1">
    <source>
        <dbReference type="HAMAP-Rule" id="MF_01865"/>
    </source>
</evidence>
<evidence type="ECO:0000255" key="2">
    <source>
        <dbReference type="PROSITE-ProRule" id="PRU01266"/>
    </source>
</evidence>
<organism>
    <name type="scientific">Zymomonas mobilis subsp. mobilis (strain ATCC 31821 / ZM4 / CP4)</name>
    <dbReference type="NCBI Taxonomy" id="264203"/>
    <lineage>
        <taxon>Bacteria</taxon>
        <taxon>Pseudomonadati</taxon>
        <taxon>Pseudomonadota</taxon>
        <taxon>Alphaproteobacteria</taxon>
        <taxon>Sphingomonadales</taxon>
        <taxon>Zymomonadaceae</taxon>
        <taxon>Zymomonas</taxon>
    </lineage>
</organism>
<accession>Q5NPC9</accession>
<comment type="function">
    <text evidence="1">Catalyzes the methylthiolation of an aspartic acid residue of ribosomal protein uS12.</text>
</comment>
<comment type="catalytic activity">
    <reaction evidence="1">
        <text>L-aspartate(89)-[ribosomal protein uS12]-hydrogen + (sulfur carrier)-SH + AH2 + 2 S-adenosyl-L-methionine = 3-methylsulfanyl-L-aspartate(89)-[ribosomal protein uS12]-hydrogen + (sulfur carrier)-H + 5'-deoxyadenosine + L-methionine + A + S-adenosyl-L-homocysteine + 2 H(+)</text>
        <dbReference type="Rhea" id="RHEA:37087"/>
        <dbReference type="Rhea" id="RHEA-COMP:10460"/>
        <dbReference type="Rhea" id="RHEA-COMP:10461"/>
        <dbReference type="Rhea" id="RHEA-COMP:14737"/>
        <dbReference type="Rhea" id="RHEA-COMP:14739"/>
        <dbReference type="ChEBI" id="CHEBI:13193"/>
        <dbReference type="ChEBI" id="CHEBI:15378"/>
        <dbReference type="ChEBI" id="CHEBI:17319"/>
        <dbReference type="ChEBI" id="CHEBI:17499"/>
        <dbReference type="ChEBI" id="CHEBI:29917"/>
        <dbReference type="ChEBI" id="CHEBI:29961"/>
        <dbReference type="ChEBI" id="CHEBI:57844"/>
        <dbReference type="ChEBI" id="CHEBI:57856"/>
        <dbReference type="ChEBI" id="CHEBI:59789"/>
        <dbReference type="ChEBI" id="CHEBI:64428"/>
        <dbReference type="ChEBI" id="CHEBI:73599"/>
        <dbReference type="EC" id="2.8.4.4"/>
    </reaction>
</comment>
<comment type="cofactor">
    <cofactor evidence="1">
        <name>[4Fe-4S] cluster</name>
        <dbReference type="ChEBI" id="CHEBI:49883"/>
    </cofactor>
    <text evidence="1">Binds 2 [4Fe-4S] clusters. One cluster is coordinated with 3 cysteines and an exchangeable S-adenosyl-L-methionine.</text>
</comment>
<comment type="subcellular location">
    <subcellularLocation>
        <location evidence="1">Cytoplasm</location>
    </subcellularLocation>
</comment>
<comment type="similarity">
    <text evidence="1">Belongs to the methylthiotransferase family. RimO subfamily.</text>
</comment>
<protein>
    <recommendedName>
        <fullName evidence="1">Ribosomal protein uS12 methylthiotransferase RimO</fullName>
        <shortName evidence="1">uS12 MTTase</shortName>
        <shortName evidence="1">uS12 methylthiotransferase</shortName>
        <ecNumber evidence="1">2.8.4.4</ecNumber>
    </recommendedName>
    <alternativeName>
        <fullName evidence="1">Ribosomal protein uS12 (aspartate-C(3))-methylthiotransferase</fullName>
    </alternativeName>
    <alternativeName>
        <fullName evidence="1">Ribosome maturation factor RimO</fullName>
    </alternativeName>
</protein>
<proteinExistence type="inferred from homology"/>
<gene>
    <name evidence="1" type="primary">rimO</name>
    <name type="ordered locus">ZMO0807</name>
</gene>
<dbReference type="EC" id="2.8.4.4" evidence="1"/>
<dbReference type="EMBL" id="AE008692">
    <property type="protein sequence ID" value="AAV89431.2"/>
    <property type="molecule type" value="Genomic_DNA"/>
</dbReference>
<dbReference type="RefSeq" id="WP_011240680.1">
    <property type="nucleotide sequence ID" value="NZ_CP035711.1"/>
</dbReference>
<dbReference type="SMR" id="Q5NPC9"/>
<dbReference type="STRING" id="264203.ZMO0807"/>
<dbReference type="KEGG" id="zmo:ZMO0807"/>
<dbReference type="eggNOG" id="COG0621">
    <property type="taxonomic scope" value="Bacteria"/>
</dbReference>
<dbReference type="HOGENOM" id="CLU_018697_0_0_5"/>
<dbReference type="Proteomes" id="UP000001173">
    <property type="component" value="Chromosome"/>
</dbReference>
<dbReference type="GO" id="GO:0005829">
    <property type="term" value="C:cytosol"/>
    <property type="evidence" value="ECO:0007669"/>
    <property type="project" value="TreeGrafter"/>
</dbReference>
<dbReference type="GO" id="GO:0051539">
    <property type="term" value="F:4 iron, 4 sulfur cluster binding"/>
    <property type="evidence" value="ECO:0007669"/>
    <property type="project" value="UniProtKB-UniRule"/>
</dbReference>
<dbReference type="GO" id="GO:0035599">
    <property type="term" value="F:aspartic acid methylthiotransferase activity"/>
    <property type="evidence" value="ECO:0007669"/>
    <property type="project" value="TreeGrafter"/>
</dbReference>
<dbReference type="GO" id="GO:0046872">
    <property type="term" value="F:metal ion binding"/>
    <property type="evidence" value="ECO:0007669"/>
    <property type="project" value="UniProtKB-KW"/>
</dbReference>
<dbReference type="GO" id="GO:0103039">
    <property type="term" value="F:protein methylthiotransferase activity"/>
    <property type="evidence" value="ECO:0007669"/>
    <property type="project" value="UniProtKB-EC"/>
</dbReference>
<dbReference type="GO" id="GO:0006400">
    <property type="term" value="P:tRNA modification"/>
    <property type="evidence" value="ECO:0007669"/>
    <property type="project" value="InterPro"/>
</dbReference>
<dbReference type="CDD" id="cd01335">
    <property type="entry name" value="Radical_SAM"/>
    <property type="match status" value="1"/>
</dbReference>
<dbReference type="FunFam" id="3.40.50.12160:FF:000002">
    <property type="entry name" value="Ribosomal protein S12 methylthiotransferase RimO"/>
    <property type="match status" value="1"/>
</dbReference>
<dbReference type="FunFam" id="3.80.30.20:FF:000001">
    <property type="entry name" value="tRNA-2-methylthio-N(6)-dimethylallyladenosine synthase 2"/>
    <property type="match status" value="1"/>
</dbReference>
<dbReference type="Gene3D" id="3.40.50.12160">
    <property type="entry name" value="Methylthiotransferase, N-terminal domain"/>
    <property type="match status" value="1"/>
</dbReference>
<dbReference type="Gene3D" id="2.40.50.140">
    <property type="entry name" value="Nucleic acid-binding proteins"/>
    <property type="match status" value="1"/>
</dbReference>
<dbReference type="Gene3D" id="3.80.30.20">
    <property type="entry name" value="tm_1862 like domain"/>
    <property type="match status" value="1"/>
</dbReference>
<dbReference type="HAMAP" id="MF_01865">
    <property type="entry name" value="MTTase_RimO"/>
    <property type="match status" value="1"/>
</dbReference>
<dbReference type="InterPro" id="IPR006638">
    <property type="entry name" value="Elp3/MiaA/NifB-like_rSAM"/>
</dbReference>
<dbReference type="InterPro" id="IPR005839">
    <property type="entry name" value="Methylthiotransferase"/>
</dbReference>
<dbReference type="InterPro" id="IPR020612">
    <property type="entry name" value="Methylthiotransferase_CS"/>
</dbReference>
<dbReference type="InterPro" id="IPR013848">
    <property type="entry name" value="Methylthiotransferase_N"/>
</dbReference>
<dbReference type="InterPro" id="IPR038135">
    <property type="entry name" value="Methylthiotransferase_N_sf"/>
</dbReference>
<dbReference type="InterPro" id="IPR012340">
    <property type="entry name" value="NA-bd_OB-fold"/>
</dbReference>
<dbReference type="InterPro" id="IPR005840">
    <property type="entry name" value="Ribosomal_uS12_MeSTrfase_RimO"/>
</dbReference>
<dbReference type="InterPro" id="IPR007197">
    <property type="entry name" value="rSAM"/>
</dbReference>
<dbReference type="InterPro" id="IPR023404">
    <property type="entry name" value="rSAM_horseshoe"/>
</dbReference>
<dbReference type="InterPro" id="IPR002792">
    <property type="entry name" value="TRAM_dom"/>
</dbReference>
<dbReference type="NCBIfam" id="TIGR01125">
    <property type="entry name" value="30S ribosomal protein S12 methylthiotransferase RimO"/>
    <property type="match status" value="1"/>
</dbReference>
<dbReference type="NCBIfam" id="TIGR00089">
    <property type="entry name" value="MiaB/RimO family radical SAM methylthiotransferase"/>
    <property type="match status" value="1"/>
</dbReference>
<dbReference type="PANTHER" id="PTHR43837">
    <property type="entry name" value="RIBOSOMAL PROTEIN S12 METHYLTHIOTRANSFERASE RIMO"/>
    <property type="match status" value="1"/>
</dbReference>
<dbReference type="PANTHER" id="PTHR43837:SF1">
    <property type="entry name" value="RIBOSOMAL PROTEIN US12 METHYLTHIOTRANSFERASE RIMO"/>
    <property type="match status" value="1"/>
</dbReference>
<dbReference type="Pfam" id="PF04055">
    <property type="entry name" value="Radical_SAM"/>
    <property type="match status" value="1"/>
</dbReference>
<dbReference type="Pfam" id="PF18693">
    <property type="entry name" value="TRAM_2"/>
    <property type="match status" value="1"/>
</dbReference>
<dbReference type="Pfam" id="PF00919">
    <property type="entry name" value="UPF0004"/>
    <property type="match status" value="1"/>
</dbReference>
<dbReference type="SFLD" id="SFLDG01082">
    <property type="entry name" value="B12-binding_domain_containing"/>
    <property type="match status" value="1"/>
</dbReference>
<dbReference type="SFLD" id="SFLDS00029">
    <property type="entry name" value="Radical_SAM"/>
    <property type="match status" value="1"/>
</dbReference>
<dbReference type="SFLD" id="SFLDF00274">
    <property type="entry name" value="ribosomal_protein_S12_methylth"/>
    <property type="match status" value="1"/>
</dbReference>
<dbReference type="SMART" id="SM00729">
    <property type="entry name" value="Elp3"/>
    <property type="match status" value="1"/>
</dbReference>
<dbReference type="SUPFAM" id="SSF102114">
    <property type="entry name" value="Radical SAM enzymes"/>
    <property type="match status" value="1"/>
</dbReference>
<dbReference type="PROSITE" id="PS51449">
    <property type="entry name" value="MTTASE_N"/>
    <property type="match status" value="1"/>
</dbReference>
<dbReference type="PROSITE" id="PS01278">
    <property type="entry name" value="MTTASE_RADICAL"/>
    <property type="match status" value="1"/>
</dbReference>
<dbReference type="PROSITE" id="PS51918">
    <property type="entry name" value="RADICAL_SAM"/>
    <property type="match status" value="1"/>
</dbReference>
<dbReference type="PROSITE" id="PS50926">
    <property type="entry name" value="TRAM"/>
    <property type="match status" value="1"/>
</dbReference>
<feature type="chain" id="PRO_0000375077" description="Ribosomal protein uS12 methylthiotransferase RimO">
    <location>
        <begin position="1"/>
        <end position="443"/>
    </location>
</feature>
<feature type="domain" description="MTTase N-terminal" evidence="1">
    <location>
        <begin position="9"/>
        <end position="119"/>
    </location>
</feature>
<feature type="domain" description="Radical SAM core" evidence="2">
    <location>
        <begin position="136"/>
        <end position="373"/>
    </location>
</feature>
<feature type="domain" description="TRAM" evidence="1">
    <location>
        <begin position="376"/>
        <end position="443"/>
    </location>
</feature>
<feature type="binding site" evidence="1">
    <location>
        <position position="18"/>
    </location>
    <ligand>
        <name>[4Fe-4S] cluster</name>
        <dbReference type="ChEBI" id="CHEBI:49883"/>
        <label>1</label>
    </ligand>
</feature>
<feature type="binding site" evidence="1">
    <location>
        <position position="54"/>
    </location>
    <ligand>
        <name>[4Fe-4S] cluster</name>
        <dbReference type="ChEBI" id="CHEBI:49883"/>
        <label>1</label>
    </ligand>
</feature>
<feature type="binding site" evidence="1">
    <location>
        <position position="83"/>
    </location>
    <ligand>
        <name>[4Fe-4S] cluster</name>
        <dbReference type="ChEBI" id="CHEBI:49883"/>
        <label>1</label>
    </ligand>
</feature>
<feature type="binding site" evidence="1">
    <location>
        <position position="150"/>
    </location>
    <ligand>
        <name>[4Fe-4S] cluster</name>
        <dbReference type="ChEBI" id="CHEBI:49883"/>
        <label>2</label>
        <note>4Fe-4S-S-AdoMet</note>
    </ligand>
</feature>
<feature type="binding site" evidence="1">
    <location>
        <position position="154"/>
    </location>
    <ligand>
        <name>[4Fe-4S] cluster</name>
        <dbReference type="ChEBI" id="CHEBI:49883"/>
        <label>2</label>
        <note>4Fe-4S-S-AdoMet</note>
    </ligand>
</feature>
<feature type="binding site" evidence="1">
    <location>
        <position position="157"/>
    </location>
    <ligand>
        <name>[4Fe-4S] cluster</name>
        <dbReference type="ChEBI" id="CHEBI:49883"/>
        <label>2</label>
        <note>4Fe-4S-S-AdoMet</note>
    </ligand>
</feature>
<reference key="1">
    <citation type="journal article" date="2005" name="Nat. Biotechnol.">
        <title>The genome sequence of the ethanologenic bacterium Zymomonas mobilis ZM4.</title>
        <authorList>
            <person name="Seo J.-S."/>
            <person name="Chong H."/>
            <person name="Park H.S."/>
            <person name="Yoon K.-O."/>
            <person name="Jung C."/>
            <person name="Kim J.J."/>
            <person name="Hong J.H."/>
            <person name="Kim H."/>
            <person name="Kim J.-H."/>
            <person name="Kil J.-I."/>
            <person name="Park C.J."/>
            <person name="Oh H.-M."/>
            <person name="Lee J.-S."/>
            <person name="Jin S.-J."/>
            <person name="Um H.-W."/>
            <person name="Lee H.-J."/>
            <person name="Oh S.-J."/>
            <person name="Kim J.Y."/>
            <person name="Kang H.L."/>
            <person name="Lee S.Y."/>
            <person name="Lee K.J."/>
            <person name="Kang H.S."/>
        </authorList>
    </citation>
    <scope>NUCLEOTIDE SEQUENCE [LARGE SCALE GENOMIC DNA]</scope>
    <source>
        <strain>ATCC 31821 / ZM4 / CP4</strain>
    </source>
</reference>
<keyword id="KW-0004">4Fe-4S</keyword>
<keyword id="KW-0963">Cytoplasm</keyword>
<keyword id="KW-0408">Iron</keyword>
<keyword id="KW-0411">Iron-sulfur</keyword>
<keyword id="KW-0479">Metal-binding</keyword>
<keyword id="KW-1185">Reference proteome</keyword>
<keyword id="KW-0949">S-adenosyl-L-methionine</keyword>
<keyword id="KW-0808">Transferase</keyword>
<sequence length="443" mass="49063">MIKKLPTSPKIGMVSLGCPKALVDSERILTKLRSEGYNLSSQYDEADVVLVNTCGFIDSAKEESLDAIGEAMAENGRVIVTGCLGNEANRIRERFPDILAITGAQQYEEVVSAVHDAAPIEASPYVDLVPEQGLKLTPRHYSYLKISEGCNHRCSFCIIPSLRGDLVSRRADAILREAEKLVAAGTKELLVIGQDSSAYGVDLRHQEYRWKDRMVKADLTDLARGLGELGAWVRLHYVYPYPHVDNLIPLMAEGLILPYLDIPFQHASPSVLKRMKRPANEVKILDRLTKWREIVPDIALRSSFVVGFPGETEQDFQYLLDWLDEAQLDRVGAFRFEAVEGAAANAFDGAVPEEVKNERYQRLMEKAAQISEAKLQAKIGRDIATIIDRTDGEGGASGRSYADAPEIDGEVHLRDADNLKIGDIVTVRVEDADEHDLFGVALS</sequence>